<gene>
    <name evidence="1" type="primary">rplQ</name>
    <name type="ordered locus">Asuc_0485</name>
</gene>
<sequence>MRHRKSGRQLNRNSSHRQAMFRNMASALVSHEIIKTTLPKAKELRRVVEPLITLAKEDSVANRRLAFARTRNVETVAKLFNELGPRFAQRAGGYTRILKCGFRAGDNAPMAYIELVDRPEVSTETATTE</sequence>
<dbReference type="EMBL" id="CP000746">
    <property type="protein sequence ID" value="ABR73861.1"/>
    <property type="molecule type" value="Genomic_DNA"/>
</dbReference>
<dbReference type="RefSeq" id="WP_012072241.1">
    <property type="nucleotide sequence ID" value="NC_009655.1"/>
</dbReference>
<dbReference type="SMR" id="A6VLL4"/>
<dbReference type="STRING" id="339671.Asuc_0485"/>
<dbReference type="KEGG" id="asu:Asuc_0485"/>
<dbReference type="eggNOG" id="COG0203">
    <property type="taxonomic scope" value="Bacteria"/>
</dbReference>
<dbReference type="HOGENOM" id="CLU_074407_2_0_6"/>
<dbReference type="OrthoDB" id="9809073at2"/>
<dbReference type="Proteomes" id="UP000001114">
    <property type="component" value="Chromosome"/>
</dbReference>
<dbReference type="GO" id="GO:0022625">
    <property type="term" value="C:cytosolic large ribosomal subunit"/>
    <property type="evidence" value="ECO:0007669"/>
    <property type="project" value="TreeGrafter"/>
</dbReference>
<dbReference type="GO" id="GO:0003735">
    <property type="term" value="F:structural constituent of ribosome"/>
    <property type="evidence" value="ECO:0007669"/>
    <property type="project" value="InterPro"/>
</dbReference>
<dbReference type="GO" id="GO:0006412">
    <property type="term" value="P:translation"/>
    <property type="evidence" value="ECO:0007669"/>
    <property type="project" value="UniProtKB-UniRule"/>
</dbReference>
<dbReference type="FunFam" id="3.90.1030.10:FF:000001">
    <property type="entry name" value="50S ribosomal protein L17"/>
    <property type="match status" value="1"/>
</dbReference>
<dbReference type="Gene3D" id="3.90.1030.10">
    <property type="entry name" value="Ribosomal protein L17"/>
    <property type="match status" value="1"/>
</dbReference>
<dbReference type="HAMAP" id="MF_01368">
    <property type="entry name" value="Ribosomal_bL17"/>
    <property type="match status" value="1"/>
</dbReference>
<dbReference type="InterPro" id="IPR000456">
    <property type="entry name" value="Ribosomal_bL17"/>
</dbReference>
<dbReference type="InterPro" id="IPR047859">
    <property type="entry name" value="Ribosomal_bL17_CS"/>
</dbReference>
<dbReference type="InterPro" id="IPR036373">
    <property type="entry name" value="Ribosomal_bL17_sf"/>
</dbReference>
<dbReference type="NCBIfam" id="TIGR00059">
    <property type="entry name" value="L17"/>
    <property type="match status" value="1"/>
</dbReference>
<dbReference type="PANTHER" id="PTHR14413:SF16">
    <property type="entry name" value="LARGE RIBOSOMAL SUBUNIT PROTEIN BL17M"/>
    <property type="match status" value="1"/>
</dbReference>
<dbReference type="PANTHER" id="PTHR14413">
    <property type="entry name" value="RIBOSOMAL PROTEIN L17"/>
    <property type="match status" value="1"/>
</dbReference>
<dbReference type="Pfam" id="PF01196">
    <property type="entry name" value="Ribosomal_L17"/>
    <property type="match status" value="1"/>
</dbReference>
<dbReference type="SUPFAM" id="SSF64263">
    <property type="entry name" value="Prokaryotic ribosomal protein L17"/>
    <property type="match status" value="1"/>
</dbReference>
<dbReference type="PROSITE" id="PS01167">
    <property type="entry name" value="RIBOSOMAL_L17"/>
    <property type="match status" value="1"/>
</dbReference>
<evidence type="ECO:0000255" key="1">
    <source>
        <dbReference type="HAMAP-Rule" id="MF_01368"/>
    </source>
</evidence>
<evidence type="ECO:0000305" key="2"/>
<keyword id="KW-1185">Reference proteome</keyword>
<keyword id="KW-0687">Ribonucleoprotein</keyword>
<keyword id="KW-0689">Ribosomal protein</keyword>
<proteinExistence type="inferred from homology"/>
<protein>
    <recommendedName>
        <fullName evidence="1">Large ribosomal subunit protein bL17</fullName>
    </recommendedName>
    <alternativeName>
        <fullName evidence="2">50S ribosomal protein L17</fullName>
    </alternativeName>
</protein>
<organism>
    <name type="scientific">Actinobacillus succinogenes (strain ATCC 55618 / DSM 22257 / CCUG 43843 / 130Z)</name>
    <dbReference type="NCBI Taxonomy" id="339671"/>
    <lineage>
        <taxon>Bacteria</taxon>
        <taxon>Pseudomonadati</taxon>
        <taxon>Pseudomonadota</taxon>
        <taxon>Gammaproteobacteria</taxon>
        <taxon>Pasteurellales</taxon>
        <taxon>Pasteurellaceae</taxon>
        <taxon>Actinobacillus</taxon>
    </lineage>
</organism>
<feature type="chain" id="PRO_1000073428" description="Large ribosomal subunit protein bL17">
    <location>
        <begin position="1"/>
        <end position="129"/>
    </location>
</feature>
<reference key="1">
    <citation type="journal article" date="2010" name="BMC Genomics">
        <title>A genomic perspective on the potential of Actinobacillus succinogenes for industrial succinate production.</title>
        <authorList>
            <person name="McKinlay J.B."/>
            <person name="Laivenieks M."/>
            <person name="Schindler B.D."/>
            <person name="McKinlay A.A."/>
            <person name="Siddaramappa S."/>
            <person name="Challacombe J.F."/>
            <person name="Lowry S.R."/>
            <person name="Clum A."/>
            <person name="Lapidus A.L."/>
            <person name="Burkhart K.B."/>
            <person name="Harkins V."/>
            <person name="Vieille C."/>
        </authorList>
    </citation>
    <scope>NUCLEOTIDE SEQUENCE [LARGE SCALE GENOMIC DNA]</scope>
    <source>
        <strain>ATCC 55618 / DSM 22257 / CCUG 43843 / 130Z</strain>
    </source>
</reference>
<name>RL17_ACTSZ</name>
<accession>A6VLL4</accession>
<comment type="subunit">
    <text evidence="1">Part of the 50S ribosomal subunit. Contacts protein L32.</text>
</comment>
<comment type="similarity">
    <text evidence="1">Belongs to the bacterial ribosomal protein bL17 family.</text>
</comment>